<keyword id="KW-0378">Hydrolase</keyword>
<sequence length="161" mass="18657">MSNSSKKHLDLPYRPGVGMMILNANNHIFVGKRIDTKISAWQMPQGGIVPGETPSIAAMREMLEEIGSDKGYIIAESKFWYSYDVPSFLIPKLWNGNFRGQKQRWFLIRFTGNNEDININTSNPEFDQWRWASLDELLSIIIPFKRKLYQAVVKEFESLIQ</sequence>
<dbReference type="EC" id="3.6.1.-" evidence="1"/>
<dbReference type="EMBL" id="AE006914">
    <property type="protein sequence ID" value="AAL02858.1"/>
    <property type="molecule type" value="Genomic_DNA"/>
</dbReference>
<dbReference type="PIR" id="H97739">
    <property type="entry name" value="H97739"/>
</dbReference>
<dbReference type="RefSeq" id="WP_010976978.1">
    <property type="nucleotide sequence ID" value="NC_003103.1"/>
</dbReference>
<dbReference type="SMR" id="Q92IV0"/>
<dbReference type="GeneID" id="927499"/>
<dbReference type="KEGG" id="rco:RC0320"/>
<dbReference type="PATRIC" id="fig|272944.4.peg.367"/>
<dbReference type="HOGENOM" id="CLU_087195_3_0_5"/>
<dbReference type="Proteomes" id="UP000000816">
    <property type="component" value="Chromosome"/>
</dbReference>
<dbReference type="GO" id="GO:0005737">
    <property type="term" value="C:cytoplasm"/>
    <property type="evidence" value="ECO:0007669"/>
    <property type="project" value="TreeGrafter"/>
</dbReference>
<dbReference type="GO" id="GO:0034353">
    <property type="term" value="F:mRNA 5'-diphosphatase activity"/>
    <property type="evidence" value="ECO:0007669"/>
    <property type="project" value="TreeGrafter"/>
</dbReference>
<dbReference type="GO" id="GO:0006402">
    <property type="term" value="P:mRNA catabolic process"/>
    <property type="evidence" value="ECO:0007669"/>
    <property type="project" value="TreeGrafter"/>
</dbReference>
<dbReference type="CDD" id="cd03671">
    <property type="entry name" value="NUDIX_Ap4A_hydrolase_plant_like"/>
    <property type="match status" value="1"/>
</dbReference>
<dbReference type="Gene3D" id="3.90.79.10">
    <property type="entry name" value="Nucleoside Triphosphate Pyrophosphohydrolase"/>
    <property type="match status" value="1"/>
</dbReference>
<dbReference type="HAMAP" id="MF_00298">
    <property type="entry name" value="Nudix_RppH"/>
    <property type="match status" value="1"/>
</dbReference>
<dbReference type="InterPro" id="IPR015797">
    <property type="entry name" value="NUDIX_hydrolase-like_dom_sf"/>
</dbReference>
<dbReference type="InterPro" id="IPR020084">
    <property type="entry name" value="NUDIX_hydrolase_CS"/>
</dbReference>
<dbReference type="InterPro" id="IPR000086">
    <property type="entry name" value="NUDIX_hydrolase_dom"/>
</dbReference>
<dbReference type="InterPro" id="IPR022927">
    <property type="entry name" value="RppH"/>
</dbReference>
<dbReference type="NCBIfam" id="NF001936">
    <property type="entry name" value="PRK00714.1-3"/>
    <property type="match status" value="1"/>
</dbReference>
<dbReference type="NCBIfam" id="NF001938">
    <property type="entry name" value="PRK00714.1-5"/>
    <property type="match status" value="1"/>
</dbReference>
<dbReference type="PANTHER" id="PTHR23114">
    <property type="entry name" value="M7GPPPN-MRNA HYDROLASE"/>
    <property type="match status" value="1"/>
</dbReference>
<dbReference type="PANTHER" id="PTHR23114:SF17">
    <property type="entry name" value="M7GPPPN-MRNA HYDROLASE"/>
    <property type="match status" value="1"/>
</dbReference>
<dbReference type="Pfam" id="PF00293">
    <property type="entry name" value="NUDIX"/>
    <property type="match status" value="1"/>
</dbReference>
<dbReference type="SUPFAM" id="SSF55811">
    <property type="entry name" value="Nudix"/>
    <property type="match status" value="1"/>
</dbReference>
<dbReference type="PROSITE" id="PS51462">
    <property type="entry name" value="NUDIX"/>
    <property type="match status" value="1"/>
</dbReference>
<dbReference type="PROSITE" id="PS00893">
    <property type="entry name" value="NUDIX_BOX"/>
    <property type="match status" value="1"/>
</dbReference>
<proteinExistence type="inferred from homology"/>
<evidence type="ECO:0000255" key="1">
    <source>
        <dbReference type="HAMAP-Rule" id="MF_00298"/>
    </source>
</evidence>
<comment type="function">
    <text evidence="1">Accelerates the degradation of transcripts by removing pyrophosphate from the 5'-end of triphosphorylated RNA, leading to a more labile monophosphorylated state that can stimulate subsequent ribonuclease cleavage.</text>
</comment>
<comment type="cofactor">
    <cofactor evidence="1">
        <name>a divalent metal cation</name>
        <dbReference type="ChEBI" id="CHEBI:60240"/>
    </cofactor>
</comment>
<comment type="similarity">
    <text evidence="1">Belongs to the Nudix hydrolase family. RppH subfamily.</text>
</comment>
<organism>
    <name type="scientific">Rickettsia conorii (strain ATCC VR-613 / Malish 7)</name>
    <dbReference type="NCBI Taxonomy" id="272944"/>
    <lineage>
        <taxon>Bacteria</taxon>
        <taxon>Pseudomonadati</taxon>
        <taxon>Pseudomonadota</taxon>
        <taxon>Alphaproteobacteria</taxon>
        <taxon>Rickettsiales</taxon>
        <taxon>Rickettsiaceae</taxon>
        <taxon>Rickettsieae</taxon>
        <taxon>Rickettsia</taxon>
        <taxon>spotted fever group</taxon>
    </lineage>
</organism>
<accession>Q92IV0</accession>
<protein>
    <recommendedName>
        <fullName evidence="1">RNA pyrophosphohydrolase</fullName>
        <ecNumber evidence="1">3.6.1.-</ecNumber>
    </recommendedName>
    <alternativeName>
        <fullName evidence="1">(Di)nucleoside polyphosphate hydrolase</fullName>
    </alternativeName>
</protein>
<feature type="chain" id="PRO_0000057024" description="RNA pyrophosphohydrolase">
    <location>
        <begin position="1"/>
        <end position="161"/>
    </location>
</feature>
<feature type="domain" description="Nudix hydrolase" evidence="1">
    <location>
        <begin position="12"/>
        <end position="154"/>
    </location>
</feature>
<feature type="short sequence motif" description="Nudix box">
    <location>
        <begin position="46"/>
        <end position="67"/>
    </location>
</feature>
<name>RPPH_RICCN</name>
<reference key="1">
    <citation type="journal article" date="2001" name="Science">
        <title>Mechanisms of evolution in Rickettsia conorii and R. prowazekii.</title>
        <authorList>
            <person name="Ogata H."/>
            <person name="Audic S."/>
            <person name="Renesto-Audiffren P."/>
            <person name="Fournier P.-E."/>
            <person name="Barbe V."/>
            <person name="Samson D."/>
            <person name="Roux V."/>
            <person name="Cossart P."/>
            <person name="Weissenbach J."/>
            <person name="Claverie J.-M."/>
            <person name="Raoult D."/>
        </authorList>
    </citation>
    <scope>NUCLEOTIDE SEQUENCE [LARGE SCALE GENOMIC DNA]</scope>
    <source>
        <strain>ATCC VR-613 / Malish 7</strain>
    </source>
</reference>
<gene>
    <name evidence="1" type="primary">rppH</name>
    <name type="synonym">invA</name>
    <name evidence="1" type="synonym">nudH</name>
    <name type="ordered locus">RC0320</name>
</gene>